<gene>
    <name evidence="1" type="primary">rpsB</name>
    <name type="ordered locus">AnaeK_0284</name>
</gene>
<organism>
    <name type="scientific">Anaeromyxobacter sp. (strain K)</name>
    <dbReference type="NCBI Taxonomy" id="447217"/>
    <lineage>
        <taxon>Bacteria</taxon>
        <taxon>Pseudomonadati</taxon>
        <taxon>Myxococcota</taxon>
        <taxon>Myxococcia</taxon>
        <taxon>Myxococcales</taxon>
        <taxon>Cystobacterineae</taxon>
        <taxon>Anaeromyxobacteraceae</taxon>
        <taxon>Anaeromyxobacter</taxon>
    </lineage>
</organism>
<protein>
    <recommendedName>
        <fullName evidence="1">Small ribosomal subunit protein uS2</fullName>
    </recommendedName>
    <alternativeName>
        <fullName evidence="3">30S ribosomal protein S2</fullName>
    </alternativeName>
</protein>
<sequence length="314" mass="34683">MAAALSQGGTAITMKALLEAGVHFGHQTKRWNPKMKPFIFGARNGIYIIDLQKTVGLARNALRFVSDSVAKGGSVLFVGTKKQAQDAIREEASRSGQFFVTNRWLGGTLTNFKTVKQGIDRLKTIEKMAADGTYERLPKKEVAQLEREREKLEKNLGGIKELSRLPSALFVIDTKKEHIAVHEANRLGIPVVAVVDTNCDPEGIDYVIPGNDDAIRSIRLFTGKVAEACIEGKGRYSAWVAEHGGHDERREQEDRDAASERGHKDRRDRRDRRGGPRERREPREDRAAASANVEVVRKGEVAPAAAPEAAPAKE</sequence>
<dbReference type="EMBL" id="CP001131">
    <property type="protein sequence ID" value="ACG71526.1"/>
    <property type="molecule type" value="Genomic_DNA"/>
</dbReference>
<dbReference type="RefSeq" id="WP_012524361.1">
    <property type="nucleotide sequence ID" value="NC_011145.1"/>
</dbReference>
<dbReference type="SMR" id="B4UMB8"/>
<dbReference type="KEGG" id="ank:AnaeK_0284"/>
<dbReference type="HOGENOM" id="CLU_040318_0_2_7"/>
<dbReference type="OrthoDB" id="9808036at2"/>
<dbReference type="Proteomes" id="UP000001871">
    <property type="component" value="Chromosome"/>
</dbReference>
<dbReference type="GO" id="GO:0022627">
    <property type="term" value="C:cytosolic small ribosomal subunit"/>
    <property type="evidence" value="ECO:0007669"/>
    <property type="project" value="TreeGrafter"/>
</dbReference>
<dbReference type="GO" id="GO:0003735">
    <property type="term" value="F:structural constituent of ribosome"/>
    <property type="evidence" value="ECO:0007669"/>
    <property type="project" value="InterPro"/>
</dbReference>
<dbReference type="GO" id="GO:0006412">
    <property type="term" value="P:translation"/>
    <property type="evidence" value="ECO:0007669"/>
    <property type="project" value="UniProtKB-UniRule"/>
</dbReference>
<dbReference type="CDD" id="cd01425">
    <property type="entry name" value="RPS2"/>
    <property type="match status" value="1"/>
</dbReference>
<dbReference type="FunFam" id="1.10.287.610:FF:000001">
    <property type="entry name" value="30S ribosomal protein S2"/>
    <property type="match status" value="1"/>
</dbReference>
<dbReference type="Gene3D" id="3.40.50.10490">
    <property type="entry name" value="Glucose-6-phosphate isomerase like protein, domain 1"/>
    <property type="match status" value="1"/>
</dbReference>
<dbReference type="Gene3D" id="1.10.287.610">
    <property type="entry name" value="Helix hairpin bin"/>
    <property type="match status" value="1"/>
</dbReference>
<dbReference type="HAMAP" id="MF_00291_B">
    <property type="entry name" value="Ribosomal_uS2_B"/>
    <property type="match status" value="1"/>
</dbReference>
<dbReference type="InterPro" id="IPR001865">
    <property type="entry name" value="Ribosomal_uS2"/>
</dbReference>
<dbReference type="InterPro" id="IPR005706">
    <property type="entry name" value="Ribosomal_uS2_bac/mit/plastid"/>
</dbReference>
<dbReference type="InterPro" id="IPR018130">
    <property type="entry name" value="Ribosomal_uS2_CS"/>
</dbReference>
<dbReference type="InterPro" id="IPR023591">
    <property type="entry name" value="Ribosomal_uS2_flav_dom_sf"/>
</dbReference>
<dbReference type="NCBIfam" id="TIGR01011">
    <property type="entry name" value="rpsB_bact"/>
    <property type="match status" value="1"/>
</dbReference>
<dbReference type="PANTHER" id="PTHR12534">
    <property type="entry name" value="30S RIBOSOMAL PROTEIN S2 PROKARYOTIC AND ORGANELLAR"/>
    <property type="match status" value="1"/>
</dbReference>
<dbReference type="PANTHER" id="PTHR12534:SF0">
    <property type="entry name" value="SMALL RIBOSOMAL SUBUNIT PROTEIN US2M"/>
    <property type="match status" value="1"/>
</dbReference>
<dbReference type="Pfam" id="PF00318">
    <property type="entry name" value="Ribosomal_S2"/>
    <property type="match status" value="1"/>
</dbReference>
<dbReference type="PRINTS" id="PR00395">
    <property type="entry name" value="RIBOSOMALS2"/>
</dbReference>
<dbReference type="SUPFAM" id="SSF52313">
    <property type="entry name" value="Ribosomal protein S2"/>
    <property type="match status" value="1"/>
</dbReference>
<dbReference type="PROSITE" id="PS00962">
    <property type="entry name" value="RIBOSOMAL_S2_1"/>
    <property type="match status" value="1"/>
</dbReference>
<dbReference type="PROSITE" id="PS00963">
    <property type="entry name" value="RIBOSOMAL_S2_2"/>
    <property type="match status" value="1"/>
</dbReference>
<feature type="chain" id="PRO_1000114989" description="Small ribosomal subunit protein uS2">
    <location>
        <begin position="1"/>
        <end position="314"/>
    </location>
</feature>
<feature type="region of interest" description="Disordered" evidence="2">
    <location>
        <begin position="244"/>
        <end position="314"/>
    </location>
</feature>
<feature type="compositionally biased region" description="Basic and acidic residues" evidence="2">
    <location>
        <begin position="244"/>
        <end position="265"/>
    </location>
</feature>
<feature type="compositionally biased region" description="Basic and acidic residues" evidence="2">
    <location>
        <begin position="271"/>
        <end position="287"/>
    </location>
</feature>
<feature type="compositionally biased region" description="Low complexity" evidence="2">
    <location>
        <begin position="302"/>
        <end position="314"/>
    </location>
</feature>
<comment type="similarity">
    <text evidence="1">Belongs to the universal ribosomal protein uS2 family.</text>
</comment>
<accession>B4UMB8</accession>
<proteinExistence type="inferred from homology"/>
<name>RS2_ANASK</name>
<keyword id="KW-0687">Ribonucleoprotein</keyword>
<keyword id="KW-0689">Ribosomal protein</keyword>
<reference key="1">
    <citation type="submission" date="2008-08" db="EMBL/GenBank/DDBJ databases">
        <title>Complete sequence of Anaeromyxobacter sp. K.</title>
        <authorList>
            <consortium name="US DOE Joint Genome Institute"/>
            <person name="Lucas S."/>
            <person name="Copeland A."/>
            <person name="Lapidus A."/>
            <person name="Glavina del Rio T."/>
            <person name="Dalin E."/>
            <person name="Tice H."/>
            <person name="Bruce D."/>
            <person name="Goodwin L."/>
            <person name="Pitluck S."/>
            <person name="Saunders E."/>
            <person name="Brettin T."/>
            <person name="Detter J.C."/>
            <person name="Han C."/>
            <person name="Larimer F."/>
            <person name="Land M."/>
            <person name="Hauser L."/>
            <person name="Kyrpides N."/>
            <person name="Ovchinnikiva G."/>
            <person name="Beliaev A."/>
        </authorList>
    </citation>
    <scope>NUCLEOTIDE SEQUENCE [LARGE SCALE GENOMIC DNA]</scope>
    <source>
        <strain>K</strain>
    </source>
</reference>
<evidence type="ECO:0000255" key="1">
    <source>
        <dbReference type="HAMAP-Rule" id="MF_00291"/>
    </source>
</evidence>
<evidence type="ECO:0000256" key="2">
    <source>
        <dbReference type="SAM" id="MobiDB-lite"/>
    </source>
</evidence>
<evidence type="ECO:0000305" key="3"/>